<protein>
    <recommendedName>
        <fullName evidence="1">Deoxyuridine 5'-triphosphate nucleotidohydrolase</fullName>
        <shortName evidence="1">dUTPase</shortName>
        <ecNumber evidence="1">3.6.1.23</ecNumber>
    </recommendedName>
    <alternativeName>
        <fullName evidence="1">dUTP pyrophosphatase</fullName>
    </alternativeName>
</protein>
<name>DUT_FUSNN</name>
<dbReference type="EC" id="3.6.1.23" evidence="1"/>
<dbReference type="EMBL" id="AE009951">
    <property type="protein sequence ID" value="AAL95224.1"/>
    <property type="molecule type" value="Genomic_DNA"/>
</dbReference>
<dbReference type="RefSeq" id="NP_603925.1">
    <property type="nucleotide sequence ID" value="NC_003454.1"/>
</dbReference>
<dbReference type="RefSeq" id="WP_011016845.1">
    <property type="nucleotide sequence ID" value="NZ_CP028101.1"/>
</dbReference>
<dbReference type="SMR" id="Q8RER7"/>
<dbReference type="FunCoup" id="Q8RER7">
    <property type="interactions" value="233"/>
</dbReference>
<dbReference type="STRING" id="190304.FN1028"/>
<dbReference type="PaxDb" id="190304-FN1028"/>
<dbReference type="EnsemblBacteria" id="AAL95224">
    <property type="protein sequence ID" value="AAL95224"/>
    <property type="gene ID" value="FN1028"/>
</dbReference>
<dbReference type="GeneID" id="79784010"/>
<dbReference type="KEGG" id="fnu:FN1028"/>
<dbReference type="PATRIC" id="fig|190304.8.peg.1592"/>
<dbReference type="eggNOG" id="COG0756">
    <property type="taxonomic scope" value="Bacteria"/>
</dbReference>
<dbReference type="HOGENOM" id="CLU_068508_1_2_0"/>
<dbReference type="InParanoid" id="Q8RER7"/>
<dbReference type="BioCyc" id="FNUC190304:G1FZS-1609-MONOMER"/>
<dbReference type="UniPathway" id="UPA00610">
    <property type="reaction ID" value="UER00666"/>
</dbReference>
<dbReference type="Proteomes" id="UP000002521">
    <property type="component" value="Chromosome"/>
</dbReference>
<dbReference type="GO" id="GO:0004170">
    <property type="term" value="F:dUTP diphosphatase activity"/>
    <property type="evidence" value="ECO:0000318"/>
    <property type="project" value="GO_Central"/>
</dbReference>
<dbReference type="GO" id="GO:0000287">
    <property type="term" value="F:magnesium ion binding"/>
    <property type="evidence" value="ECO:0000318"/>
    <property type="project" value="GO_Central"/>
</dbReference>
<dbReference type="GO" id="GO:0006226">
    <property type="term" value="P:dUMP biosynthetic process"/>
    <property type="evidence" value="ECO:0000318"/>
    <property type="project" value="GO_Central"/>
</dbReference>
<dbReference type="GO" id="GO:0046081">
    <property type="term" value="P:dUTP catabolic process"/>
    <property type="evidence" value="ECO:0000318"/>
    <property type="project" value="GO_Central"/>
</dbReference>
<dbReference type="CDD" id="cd07557">
    <property type="entry name" value="trimeric_dUTPase"/>
    <property type="match status" value="1"/>
</dbReference>
<dbReference type="FunFam" id="2.70.40.10:FF:000002">
    <property type="entry name" value="dUTP diphosphatase"/>
    <property type="match status" value="1"/>
</dbReference>
<dbReference type="Gene3D" id="2.70.40.10">
    <property type="match status" value="1"/>
</dbReference>
<dbReference type="HAMAP" id="MF_00116">
    <property type="entry name" value="dUTPase_bact"/>
    <property type="match status" value="1"/>
</dbReference>
<dbReference type="InterPro" id="IPR008181">
    <property type="entry name" value="dUTPase"/>
</dbReference>
<dbReference type="InterPro" id="IPR029054">
    <property type="entry name" value="dUTPase-like"/>
</dbReference>
<dbReference type="InterPro" id="IPR036157">
    <property type="entry name" value="dUTPase-like_sf"/>
</dbReference>
<dbReference type="InterPro" id="IPR033704">
    <property type="entry name" value="dUTPase_trimeric"/>
</dbReference>
<dbReference type="NCBIfam" id="TIGR00576">
    <property type="entry name" value="dut"/>
    <property type="match status" value="1"/>
</dbReference>
<dbReference type="NCBIfam" id="NF001862">
    <property type="entry name" value="PRK00601.1"/>
    <property type="match status" value="1"/>
</dbReference>
<dbReference type="PANTHER" id="PTHR11241">
    <property type="entry name" value="DEOXYURIDINE 5'-TRIPHOSPHATE NUCLEOTIDOHYDROLASE"/>
    <property type="match status" value="1"/>
</dbReference>
<dbReference type="PANTHER" id="PTHR11241:SF0">
    <property type="entry name" value="DEOXYURIDINE 5'-TRIPHOSPHATE NUCLEOTIDOHYDROLASE"/>
    <property type="match status" value="1"/>
</dbReference>
<dbReference type="Pfam" id="PF00692">
    <property type="entry name" value="dUTPase"/>
    <property type="match status" value="1"/>
</dbReference>
<dbReference type="SUPFAM" id="SSF51283">
    <property type="entry name" value="dUTPase-like"/>
    <property type="match status" value="1"/>
</dbReference>
<keyword id="KW-0378">Hydrolase</keyword>
<keyword id="KW-0460">Magnesium</keyword>
<keyword id="KW-0479">Metal-binding</keyword>
<keyword id="KW-0546">Nucleotide metabolism</keyword>
<keyword id="KW-1185">Reference proteome</keyword>
<evidence type="ECO:0000255" key="1">
    <source>
        <dbReference type="HAMAP-Rule" id="MF_00116"/>
    </source>
</evidence>
<gene>
    <name evidence="1" type="primary">dut</name>
    <name type="ordered locus">FN1028</name>
</gene>
<proteinExistence type="inferred from homology"/>
<accession>Q8RER7</accession>
<feature type="chain" id="PRO_0000182863" description="Deoxyuridine 5'-triphosphate nucleotidohydrolase">
    <location>
        <begin position="1"/>
        <end position="146"/>
    </location>
</feature>
<feature type="binding site" evidence="1">
    <location>
        <begin position="66"/>
        <end position="68"/>
    </location>
    <ligand>
        <name>substrate</name>
    </ligand>
</feature>
<feature type="binding site" evidence="1">
    <location>
        <position position="79"/>
    </location>
    <ligand>
        <name>substrate</name>
    </ligand>
</feature>
<feature type="binding site" evidence="1">
    <location>
        <begin position="83"/>
        <end position="85"/>
    </location>
    <ligand>
        <name>substrate</name>
    </ligand>
</feature>
<feature type="binding site" evidence="1">
    <location>
        <position position="93"/>
    </location>
    <ligand>
        <name>substrate</name>
    </ligand>
</feature>
<sequence length="146" mass="16226">MKKVQVKVIREEGVELPKYETEGSAGMDVRANIKESITLKSLERILVPTGLKVAIPEGYEIQVRPRSGLAIKHGITMLNTPGTVDSDYRGELKVIVVNLSNEAYTIEPNERIGQFVLNKIEQIEFVEVEELDSTERGESGFGHTGK</sequence>
<comment type="function">
    <text evidence="1">This enzyme is involved in nucleotide metabolism: it produces dUMP, the immediate precursor of thymidine nucleotides and it decreases the intracellular concentration of dUTP so that uracil cannot be incorporated into DNA.</text>
</comment>
<comment type="catalytic activity">
    <reaction evidence="1">
        <text>dUTP + H2O = dUMP + diphosphate + H(+)</text>
        <dbReference type="Rhea" id="RHEA:10248"/>
        <dbReference type="ChEBI" id="CHEBI:15377"/>
        <dbReference type="ChEBI" id="CHEBI:15378"/>
        <dbReference type="ChEBI" id="CHEBI:33019"/>
        <dbReference type="ChEBI" id="CHEBI:61555"/>
        <dbReference type="ChEBI" id="CHEBI:246422"/>
        <dbReference type="EC" id="3.6.1.23"/>
    </reaction>
</comment>
<comment type="cofactor">
    <cofactor evidence="1">
        <name>Mg(2+)</name>
        <dbReference type="ChEBI" id="CHEBI:18420"/>
    </cofactor>
</comment>
<comment type="pathway">
    <text evidence="1">Pyrimidine metabolism; dUMP biosynthesis; dUMP from dCTP (dUTP route): step 2/2.</text>
</comment>
<comment type="similarity">
    <text evidence="1">Belongs to the dUTPase family.</text>
</comment>
<reference key="1">
    <citation type="journal article" date="2002" name="J. Bacteriol.">
        <title>Genome sequence and analysis of the oral bacterium Fusobacterium nucleatum strain ATCC 25586.</title>
        <authorList>
            <person name="Kapatral V."/>
            <person name="Anderson I."/>
            <person name="Ivanova N."/>
            <person name="Reznik G."/>
            <person name="Los T."/>
            <person name="Lykidis A."/>
            <person name="Bhattacharyya A."/>
            <person name="Bartman A."/>
            <person name="Gardner W."/>
            <person name="Grechkin G."/>
            <person name="Zhu L."/>
            <person name="Vasieva O."/>
            <person name="Chu L."/>
            <person name="Kogan Y."/>
            <person name="Chaga O."/>
            <person name="Goltsman E."/>
            <person name="Bernal A."/>
            <person name="Larsen N."/>
            <person name="D'Souza M."/>
            <person name="Walunas T."/>
            <person name="Pusch G."/>
            <person name="Haselkorn R."/>
            <person name="Fonstein M."/>
            <person name="Kyrpides N.C."/>
            <person name="Overbeek R."/>
        </authorList>
    </citation>
    <scope>NUCLEOTIDE SEQUENCE [LARGE SCALE GENOMIC DNA]</scope>
    <source>
        <strain>ATCC 25586 / DSM 15643 / BCRC 10681 / CIP 101130 / JCM 8532 / KCTC 2640 / LMG 13131 / VPI 4355</strain>
    </source>
</reference>
<organism>
    <name type="scientific">Fusobacterium nucleatum subsp. nucleatum (strain ATCC 25586 / DSM 15643 / BCRC 10681 / CIP 101130 / JCM 8532 / KCTC 2640 / LMG 13131 / VPI 4355)</name>
    <dbReference type="NCBI Taxonomy" id="190304"/>
    <lineage>
        <taxon>Bacteria</taxon>
        <taxon>Fusobacteriati</taxon>
        <taxon>Fusobacteriota</taxon>
        <taxon>Fusobacteriia</taxon>
        <taxon>Fusobacteriales</taxon>
        <taxon>Fusobacteriaceae</taxon>
        <taxon>Fusobacterium</taxon>
    </lineage>
</organism>